<comment type="function">
    <text evidence="2">Chemotactic factor that mediates inflammatory response by attracting neutrophils, basophils, and T-cells to clear pathogens and protect the host from infection. Also plays an important role in neutrophil activation. Released in response to an inflammatory stimulus, exerts its effect by binding to the G-protein-coupled receptors CXCR1 and CXCR2, primarily found in neutrophils, monocytes and endothelial cells. G-protein heterotrimer (alpha, beta, gamma subunits) constitutively binds to CXCR1/CXCR2 receptor and activation by IL8 leads to beta and gamma subunits release from Galpha (GNAI2 in neutrophils) and activation of several downstream signaling pathways including PI3K and MAPK pathways.</text>
</comment>
<comment type="subunit">
    <text evidence="2">Homodimer. Interacts with TNFAIP6 (via Link domain); this interaction interferes with chemokine binding to glycosaminoglycans.</text>
</comment>
<comment type="subcellular location">
    <subcellularLocation>
        <location>Secreted</location>
    </subcellularLocation>
</comment>
<comment type="PTM">
    <text evidence="1">Citrullination at Arg-27 prevents proteolysis, and dampens tissue inflammation, it also enhances leukocytosis, possibly through impaired chemokine clearance from the blood circulation.</text>
</comment>
<comment type="similarity">
    <text evidence="3">Belongs to the intercrine alpha (chemokine CxC) family.</text>
</comment>
<proteinExistence type="inferred from homology"/>
<protein>
    <recommendedName>
        <fullName>Interleukin-8</fullName>
        <shortName>IL-8</shortName>
    </recommendedName>
    <alternativeName>
        <fullName>C-X-C motif chemokine 8</fullName>
    </alternativeName>
    <alternativeName>
        <fullName>Chemokine (C-X-C motif) ligand 8</fullName>
    </alternativeName>
</protein>
<reference key="1">
    <citation type="journal article" date="1995" name="J. Immunol.">
        <title>Comparative sequence analysis of cytokine genes from human and nonhuman primates.</title>
        <authorList>
            <person name="Villinger F.J."/>
            <person name="Brar S.S."/>
            <person name="Mayne A.E."/>
            <person name="Chikkala N."/>
            <person name="Ansari A.A."/>
        </authorList>
    </citation>
    <scope>NUCLEOTIDE SEQUENCE [MRNA]</scope>
    <source>
        <tissue>Blood</tissue>
    </source>
</reference>
<accession>P46653</accession>
<evidence type="ECO:0000250" key="1"/>
<evidence type="ECO:0000250" key="2">
    <source>
        <dbReference type="UniProtKB" id="P10145"/>
    </source>
</evidence>
<evidence type="ECO:0000305" key="3"/>
<feature type="signal peptide" evidence="1">
    <location>
        <begin position="1"/>
        <end position="22"/>
    </location>
</feature>
<feature type="chain" id="PRO_0000005123" description="Interleukin-8">
    <location>
        <begin position="23"/>
        <end position="101"/>
    </location>
</feature>
<feature type="modified residue" description="Citrulline" evidence="1">
    <location>
        <position position="27"/>
    </location>
</feature>
<feature type="disulfide bond" evidence="1">
    <location>
        <begin position="34"/>
        <end position="61"/>
    </location>
</feature>
<feature type="disulfide bond" evidence="1">
    <location>
        <begin position="36"/>
        <end position="77"/>
    </location>
</feature>
<name>IL8_CERAT</name>
<organism>
    <name type="scientific">Cercocebus atys</name>
    <name type="common">Sooty mangabey</name>
    <name type="synonym">Cercocebus torquatus atys</name>
    <dbReference type="NCBI Taxonomy" id="9531"/>
    <lineage>
        <taxon>Eukaryota</taxon>
        <taxon>Metazoa</taxon>
        <taxon>Chordata</taxon>
        <taxon>Craniata</taxon>
        <taxon>Vertebrata</taxon>
        <taxon>Euteleostomi</taxon>
        <taxon>Mammalia</taxon>
        <taxon>Eutheria</taxon>
        <taxon>Euarchontoglires</taxon>
        <taxon>Primates</taxon>
        <taxon>Haplorrhini</taxon>
        <taxon>Catarrhini</taxon>
        <taxon>Cercopithecidae</taxon>
        <taxon>Cercopithecinae</taxon>
        <taxon>Cercocebus</taxon>
    </lineage>
</organism>
<gene>
    <name type="primary">CXCL8</name>
    <name type="synonym">IL8</name>
</gene>
<dbReference type="EMBL" id="U19839">
    <property type="protein sequence ID" value="AAA86705.1"/>
    <property type="molecule type" value="mRNA"/>
</dbReference>
<dbReference type="RefSeq" id="XP_011938381.1">
    <property type="nucleotide sequence ID" value="XM_012082991.1"/>
</dbReference>
<dbReference type="SMR" id="P46653"/>
<dbReference type="STRING" id="9531.ENSCATP00000044592"/>
<dbReference type="Ensembl" id="ENSCATT00000069034.1">
    <property type="protein sequence ID" value="ENSCATP00000044592.1"/>
    <property type="gene ID" value="ENSCATG00000044770.1"/>
</dbReference>
<dbReference type="GeneID" id="105596231"/>
<dbReference type="KEGG" id="caty:105596231"/>
<dbReference type="CTD" id="3576"/>
<dbReference type="GeneTree" id="ENSGT00940000160757"/>
<dbReference type="OMA" id="IGTELRC"/>
<dbReference type="OrthoDB" id="11072at314294"/>
<dbReference type="Proteomes" id="UP000233060">
    <property type="component" value="Unassembled WGS sequence"/>
</dbReference>
<dbReference type="Bgee" id="ENSCATG00000044770">
    <property type="expression patterns" value="Expressed in lung and 10 other cell types or tissues"/>
</dbReference>
<dbReference type="GO" id="GO:0005615">
    <property type="term" value="C:extracellular space"/>
    <property type="evidence" value="ECO:0007669"/>
    <property type="project" value="UniProtKB-KW"/>
</dbReference>
<dbReference type="GO" id="GO:0008009">
    <property type="term" value="F:chemokine activity"/>
    <property type="evidence" value="ECO:0007669"/>
    <property type="project" value="Ensembl"/>
</dbReference>
<dbReference type="GO" id="GO:0008201">
    <property type="term" value="F:heparin binding"/>
    <property type="evidence" value="ECO:0000250"/>
    <property type="project" value="UniProtKB"/>
</dbReference>
<dbReference type="GO" id="GO:0005153">
    <property type="term" value="F:interleukin-8 receptor binding"/>
    <property type="evidence" value="ECO:0000250"/>
    <property type="project" value="UniProtKB"/>
</dbReference>
<dbReference type="GO" id="GO:0044344">
    <property type="term" value="P:cellular response to fibroblast growth factor stimulus"/>
    <property type="evidence" value="ECO:0007669"/>
    <property type="project" value="Ensembl"/>
</dbReference>
<dbReference type="GO" id="GO:0071347">
    <property type="term" value="P:cellular response to interleukin-1"/>
    <property type="evidence" value="ECO:0007669"/>
    <property type="project" value="Ensembl"/>
</dbReference>
<dbReference type="GO" id="GO:0071222">
    <property type="term" value="P:cellular response to lipopolysaccharide"/>
    <property type="evidence" value="ECO:0007669"/>
    <property type="project" value="Ensembl"/>
</dbReference>
<dbReference type="GO" id="GO:0071356">
    <property type="term" value="P:cellular response to tumor necrosis factor"/>
    <property type="evidence" value="ECO:0007669"/>
    <property type="project" value="Ensembl"/>
</dbReference>
<dbReference type="GO" id="GO:0048566">
    <property type="term" value="P:embryonic digestive tract development"/>
    <property type="evidence" value="ECO:0007669"/>
    <property type="project" value="Ensembl"/>
</dbReference>
<dbReference type="GO" id="GO:0006955">
    <property type="term" value="P:immune response"/>
    <property type="evidence" value="ECO:0007669"/>
    <property type="project" value="InterPro"/>
</dbReference>
<dbReference type="GO" id="GO:0050930">
    <property type="term" value="P:induction of positive chemotaxis"/>
    <property type="evidence" value="ECO:0000250"/>
    <property type="project" value="UniProtKB"/>
</dbReference>
<dbReference type="GO" id="GO:0006954">
    <property type="term" value="P:inflammatory response"/>
    <property type="evidence" value="ECO:0007669"/>
    <property type="project" value="UniProtKB-KW"/>
</dbReference>
<dbReference type="GO" id="GO:0035556">
    <property type="term" value="P:intracellular signal transduction"/>
    <property type="evidence" value="ECO:0007669"/>
    <property type="project" value="Ensembl"/>
</dbReference>
<dbReference type="GO" id="GO:0060354">
    <property type="term" value="P:negative regulation of cell adhesion molecule production"/>
    <property type="evidence" value="ECO:0007669"/>
    <property type="project" value="Ensembl"/>
</dbReference>
<dbReference type="GO" id="GO:0045744">
    <property type="term" value="P:negative regulation of G protein-coupled receptor signaling pathway"/>
    <property type="evidence" value="ECO:0007669"/>
    <property type="project" value="Ensembl"/>
</dbReference>
<dbReference type="GO" id="GO:0010629">
    <property type="term" value="P:negative regulation of gene expression"/>
    <property type="evidence" value="ECO:0007669"/>
    <property type="project" value="Ensembl"/>
</dbReference>
<dbReference type="GO" id="GO:0042119">
    <property type="term" value="P:neutrophil activation"/>
    <property type="evidence" value="ECO:0007669"/>
    <property type="project" value="Ensembl"/>
</dbReference>
<dbReference type="GO" id="GO:0030593">
    <property type="term" value="P:neutrophil chemotaxis"/>
    <property type="evidence" value="ECO:0000250"/>
    <property type="project" value="UniProtKB"/>
</dbReference>
<dbReference type="GO" id="GO:0045766">
    <property type="term" value="P:positive regulation of angiogenesis"/>
    <property type="evidence" value="ECO:0007669"/>
    <property type="project" value="Ensembl"/>
</dbReference>
<dbReference type="GO" id="GO:0010628">
    <property type="term" value="P:positive regulation of gene expression"/>
    <property type="evidence" value="ECO:0007669"/>
    <property type="project" value="Ensembl"/>
</dbReference>
<dbReference type="GO" id="GO:0031623">
    <property type="term" value="P:receptor internalization"/>
    <property type="evidence" value="ECO:0007669"/>
    <property type="project" value="Ensembl"/>
</dbReference>
<dbReference type="GO" id="GO:0030155">
    <property type="term" value="P:regulation of cell adhesion"/>
    <property type="evidence" value="ECO:0000250"/>
    <property type="project" value="UniProtKB"/>
</dbReference>
<dbReference type="GO" id="GO:2000535">
    <property type="term" value="P:regulation of entry of bacterium into host cell"/>
    <property type="evidence" value="ECO:0007669"/>
    <property type="project" value="Ensembl"/>
</dbReference>
<dbReference type="GO" id="GO:0045091">
    <property type="term" value="P:regulation of single stranded viral RNA replication via double stranded DNA intermediate"/>
    <property type="evidence" value="ECO:0000250"/>
    <property type="project" value="UniProtKB"/>
</dbReference>
<dbReference type="GO" id="GO:0034976">
    <property type="term" value="P:response to endoplasmic reticulum stress"/>
    <property type="evidence" value="ECO:0007669"/>
    <property type="project" value="Ensembl"/>
</dbReference>
<dbReference type="CDD" id="cd00273">
    <property type="entry name" value="Chemokine_CXC"/>
    <property type="match status" value="1"/>
</dbReference>
<dbReference type="FunFam" id="2.40.50.40:FF:000004">
    <property type="entry name" value="C-X-C motif chemokine"/>
    <property type="match status" value="1"/>
</dbReference>
<dbReference type="Gene3D" id="2.40.50.40">
    <property type="match status" value="1"/>
</dbReference>
<dbReference type="InterPro" id="IPR039809">
    <property type="entry name" value="Chemokine_b/g/d"/>
</dbReference>
<dbReference type="InterPro" id="IPR001089">
    <property type="entry name" value="Chemokine_CXC"/>
</dbReference>
<dbReference type="InterPro" id="IPR018048">
    <property type="entry name" value="Chemokine_CXC_CS"/>
</dbReference>
<dbReference type="InterPro" id="IPR001811">
    <property type="entry name" value="Chemokine_IL8-like_dom"/>
</dbReference>
<dbReference type="InterPro" id="IPR033899">
    <property type="entry name" value="CXC_Chemokine_domain"/>
</dbReference>
<dbReference type="InterPro" id="IPR036048">
    <property type="entry name" value="Interleukin_8-like_sf"/>
</dbReference>
<dbReference type="PANTHER" id="PTHR12015:SF200">
    <property type="entry name" value="INTERLEUKIN-8"/>
    <property type="match status" value="1"/>
</dbReference>
<dbReference type="PANTHER" id="PTHR12015">
    <property type="entry name" value="SMALL INDUCIBLE CYTOKINE A"/>
    <property type="match status" value="1"/>
</dbReference>
<dbReference type="Pfam" id="PF00048">
    <property type="entry name" value="IL8"/>
    <property type="match status" value="1"/>
</dbReference>
<dbReference type="PRINTS" id="PR00436">
    <property type="entry name" value="INTERLEUKIN8"/>
</dbReference>
<dbReference type="PRINTS" id="PR00437">
    <property type="entry name" value="SMALLCYTKCXC"/>
</dbReference>
<dbReference type="SMART" id="SM00199">
    <property type="entry name" value="SCY"/>
    <property type="match status" value="1"/>
</dbReference>
<dbReference type="SUPFAM" id="SSF54117">
    <property type="entry name" value="Interleukin 8-like chemokines"/>
    <property type="match status" value="1"/>
</dbReference>
<dbReference type="PROSITE" id="PS00471">
    <property type="entry name" value="SMALL_CYTOKINES_CXC"/>
    <property type="match status" value="1"/>
</dbReference>
<sequence length="101" mass="11309">MTSKLAVALLAAFLLSAALCEGAVLPRSAKELRCLCIKTYSKPFHPKFIKELRVIESGPHCVNTEIIVKLSDGRELCLDPKEPWVQRVVEKFLKRAESQNS</sequence>
<keyword id="KW-0145">Chemotaxis</keyword>
<keyword id="KW-0164">Citrullination</keyword>
<keyword id="KW-0202">Cytokine</keyword>
<keyword id="KW-1015">Disulfide bond</keyword>
<keyword id="KW-0395">Inflammatory response</keyword>
<keyword id="KW-1185">Reference proteome</keyword>
<keyword id="KW-0964">Secreted</keyword>
<keyword id="KW-0732">Signal</keyword>